<sequence>MELEVFAGQEKSELSMIEVARAILEQRGRDNEMYFSDLVNDIQTYLGKSDSAIRESLPFFYSDLNTDGSFIPLGENKWGLRSWYAIDEIDEEIITLEEDEDGAPKRKKKRVNAFMDGDEDAIDYNDDDPEDEDFTEETPSLEYDEENPDDEKSEVESYDSEINEIIPDEDLDEDVEINEEDDEEEEEEEEV</sequence>
<organism>
    <name type="scientific">Streptococcus agalactiae serotype V (strain ATCC BAA-611 / 2603 V/R)</name>
    <dbReference type="NCBI Taxonomy" id="208435"/>
    <lineage>
        <taxon>Bacteria</taxon>
        <taxon>Bacillati</taxon>
        <taxon>Bacillota</taxon>
        <taxon>Bacilli</taxon>
        <taxon>Lactobacillales</taxon>
        <taxon>Streptococcaceae</taxon>
        <taxon>Streptococcus</taxon>
    </lineage>
</organism>
<evidence type="ECO:0000255" key="1">
    <source>
        <dbReference type="HAMAP-Rule" id="MF_00357"/>
    </source>
</evidence>
<evidence type="ECO:0000255" key="2">
    <source>
        <dbReference type="PROSITE-ProRule" id="PRU01261"/>
    </source>
</evidence>
<evidence type="ECO:0000256" key="3">
    <source>
        <dbReference type="SAM" id="MobiDB-lite"/>
    </source>
</evidence>
<accession>Q8E291</accession>
<keyword id="KW-0240">DNA-directed RNA polymerase</keyword>
<keyword id="KW-0548">Nucleotidyltransferase</keyword>
<keyword id="KW-1185">Reference proteome</keyword>
<keyword id="KW-0804">Transcription</keyword>
<keyword id="KW-0808">Transferase</keyword>
<reference key="1">
    <citation type="journal article" date="2002" name="Proc. Natl. Acad. Sci. U.S.A.">
        <title>Complete genome sequence and comparative genomic analysis of an emerging human pathogen, serotype V Streptococcus agalactiae.</title>
        <authorList>
            <person name="Tettelin H."/>
            <person name="Masignani V."/>
            <person name="Cieslewicz M.J."/>
            <person name="Eisen J.A."/>
            <person name="Peterson S.N."/>
            <person name="Wessels M.R."/>
            <person name="Paulsen I.T."/>
            <person name="Nelson K.E."/>
            <person name="Margarit I."/>
            <person name="Read T.D."/>
            <person name="Madoff L.C."/>
            <person name="Wolf A.M."/>
            <person name="Beanan M.J."/>
            <person name="Brinkac L.M."/>
            <person name="Daugherty S.C."/>
            <person name="DeBoy R.T."/>
            <person name="Durkin A.S."/>
            <person name="Kolonay J.F."/>
            <person name="Madupu R."/>
            <person name="Lewis M.R."/>
            <person name="Radune D."/>
            <person name="Fedorova N.B."/>
            <person name="Scanlan D."/>
            <person name="Khouri H.M."/>
            <person name="Mulligan S."/>
            <person name="Carty H.A."/>
            <person name="Cline R.T."/>
            <person name="Van Aken S.E."/>
            <person name="Gill J."/>
            <person name="Scarselli M."/>
            <person name="Mora M."/>
            <person name="Iacobini E.T."/>
            <person name="Brettoni C."/>
            <person name="Galli G."/>
            <person name="Mariani M."/>
            <person name="Vegni F."/>
            <person name="Maione D."/>
            <person name="Rinaudo D."/>
            <person name="Rappuoli R."/>
            <person name="Telford J.L."/>
            <person name="Kasper D.L."/>
            <person name="Grandi G."/>
            <person name="Fraser C.M."/>
        </authorList>
    </citation>
    <scope>NUCLEOTIDE SEQUENCE [LARGE SCALE GENOMIC DNA]</scope>
    <source>
        <strain>ATCC BAA-611 / 2603 V/R</strain>
    </source>
</reference>
<dbReference type="EMBL" id="AE009948">
    <property type="protein sequence ID" value="AAM99014.1"/>
    <property type="molecule type" value="Genomic_DNA"/>
</dbReference>
<dbReference type="RefSeq" id="NP_687142.1">
    <property type="nucleotide sequence ID" value="NC_004116.1"/>
</dbReference>
<dbReference type="RefSeq" id="WP_000418426.1">
    <property type="nucleotide sequence ID" value="NC_004116.1"/>
</dbReference>
<dbReference type="SMR" id="Q8E291"/>
<dbReference type="STRING" id="208435.SAG0106"/>
<dbReference type="KEGG" id="sag:SAG0106"/>
<dbReference type="PATRIC" id="fig|208435.3.peg.105"/>
<dbReference type="HOGENOM" id="CLU_116648_0_0_9"/>
<dbReference type="OrthoDB" id="401223at2"/>
<dbReference type="Proteomes" id="UP000000821">
    <property type="component" value="Chromosome"/>
</dbReference>
<dbReference type="GO" id="GO:0000428">
    <property type="term" value="C:DNA-directed RNA polymerase complex"/>
    <property type="evidence" value="ECO:0007669"/>
    <property type="project" value="UniProtKB-KW"/>
</dbReference>
<dbReference type="GO" id="GO:0003899">
    <property type="term" value="F:DNA-directed RNA polymerase activity"/>
    <property type="evidence" value="ECO:0007669"/>
    <property type="project" value="UniProtKB-UniRule"/>
</dbReference>
<dbReference type="GO" id="GO:0006351">
    <property type="term" value="P:DNA-templated transcription"/>
    <property type="evidence" value="ECO:0007669"/>
    <property type="project" value="InterPro"/>
</dbReference>
<dbReference type="GO" id="GO:0006355">
    <property type="term" value="P:regulation of DNA-templated transcription"/>
    <property type="evidence" value="ECO:0007669"/>
    <property type="project" value="UniProtKB-UniRule"/>
</dbReference>
<dbReference type="Gene3D" id="1.10.10.1250">
    <property type="entry name" value="RNA polymerase, subunit delta, N-terminal domain"/>
    <property type="match status" value="1"/>
</dbReference>
<dbReference type="HAMAP" id="MF_00357">
    <property type="entry name" value="RNApol_bact_RpoE"/>
    <property type="match status" value="1"/>
</dbReference>
<dbReference type="InterPro" id="IPR007759">
    <property type="entry name" value="Asxl_HARE-HTH"/>
</dbReference>
<dbReference type="InterPro" id="IPR038087">
    <property type="entry name" value="RNAP_delta_N_dom_sf"/>
</dbReference>
<dbReference type="InterPro" id="IPR029757">
    <property type="entry name" value="RpoE"/>
</dbReference>
<dbReference type="NCBIfam" id="TIGR04567">
    <property type="entry name" value="RNAP_delt_lowGC"/>
    <property type="match status" value="1"/>
</dbReference>
<dbReference type="Pfam" id="PF05066">
    <property type="entry name" value="HARE-HTH"/>
    <property type="match status" value="1"/>
</dbReference>
<dbReference type="PROSITE" id="PS51913">
    <property type="entry name" value="HTH_HARE"/>
    <property type="match status" value="1"/>
</dbReference>
<gene>
    <name evidence="1" type="primary">rpoE</name>
    <name type="ordered locus">SAG0106</name>
</gene>
<proteinExistence type="inferred from homology"/>
<comment type="function">
    <text evidence="1">Participates in both the initiation and recycling phases of transcription. In the presence of the delta subunit, RNAP displays an increased specificity of transcription, a decreased affinity for nucleic acids, and an increased efficiency of RNA synthesis because of enhanced recycling.</text>
</comment>
<comment type="subunit">
    <text evidence="1">RNAP is composed of a core of 2 alpha, a beta and a beta' subunits. The core is associated with a delta subunit and one of several sigma factors.</text>
</comment>
<comment type="similarity">
    <text evidence="1">Belongs to the RpoE family.</text>
</comment>
<name>RPOE_STRA5</name>
<feature type="chain" id="PRO_0000303143" description="Probable DNA-directed RNA polymerase subunit delta">
    <location>
        <begin position="1"/>
        <end position="191"/>
    </location>
</feature>
<feature type="domain" description="HTH HARE-type" evidence="2">
    <location>
        <begin position="14"/>
        <end position="83"/>
    </location>
</feature>
<feature type="region of interest" description="Disordered" evidence="3">
    <location>
        <begin position="117"/>
        <end position="191"/>
    </location>
</feature>
<feature type="compositionally biased region" description="Acidic residues" evidence="3">
    <location>
        <begin position="117"/>
        <end position="136"/>
    </location>
</feature>
<feature type="compositionally biased region" description="Acidic residues" evidence="3">
    <location>
        <begin position="142"/>
        <end position="191"/>
    </location>
</feature>
<protein>
    <recommendedName>
        <fullName evidence="1">Probable DNA-directed RNA polymerase subunit delta</fullName>
    </recommendedName>
    <alternativeName>
        <fullName evidence="1">RNAP delta factor</fullName>
    </alternativeName>
</protein>